<accession>C5BN92</accession>
<name>PDXH_TERTT</name>
<keyword id="KW-0285">Flavoprotein</keyword>
<keyword id="KW-0288">FMN</keyword>
<keyword id="KW-0560">Oxidoreductase</keyword>
<keyword id="KW-0664">Pyridoxine biosynthesis</keyword>
<keyword id="KW-1185">Reference proteome</keyword>
<gene>
    <name evidence="1" type="primary">pdxH</name>
    <name type="ordered locus">TERTU_2874</name>
</gene>
<feature type="chain" id="PRO_1000215765" description="Pyridoxine/pyridoxamine 5'-phosphate oxidase">
    <location>
        <begin position="1"/>
        <end position="211"/>
    </location>
</feature>
<feature type="binding site" evidence="1">
    <location>
        <begin position="7"/>
        <end position="10"/>
    </location>
    <ligand>
        <name>substrate</name>
    </ligand>
</feature>
<feature type="binding site" evidence="1">
    <location>
        <begin position="60"/>
        <end position="65"/>
    </location>
    <ligand>
        <name>FMN</name>
        <dbReference type="ChEBI" id="CHEBI:58210"/>
    </ligand>
</feature>
<feature type="binding site" evidence="1">
    <location>
        <position position="65"/>
    </location>
    <ligand>
        <name>substrate</name>
    </ligand>
</feature>
<feature type="binding site" evidence="1">
    <location>
        <begin position="75"/>
        <end position="76"/>
    </location>
    <ligand>
        <name>FMN</name>
        <dbReference type="ChEBI" id="CHEBI:58210"/>
    </ligand>
</feature>
<feature type="binding site" evidence="1">
    <location>
        <position position="82"/>
    </location>
    <ligand>
        <name>FMN</name>
        <dbReference type="ChEBI" id="CHEBI:58210"/>
    </ligand>
</feature>
<feature type="binding site" evidence="1">
    <location>
        <position position="104"/>
    </location>
    <ligand>
        <name>FMN</name>
        <dbReference type="ChEBI" id="CHEBI:58210"/>
    </ligand>
</feature>
<feature type="binding site" evidence="1">
    <location>
        <position position="122"/>
    </location>
    <ligand>
        <name>substrate</name>
    </ligand>
</feature>
<feature type="binding site" evidence="1">
    <location>
        <position position="126"/>
    </location>
    <ligand>
        <name>substrate</name>
    </ligand>
</feature>
<feature type="binding site" evidence="1">
    <location>
        <position position="130"/>
    </location>
    <ligand>
        <name>substrate</name>
    </ligand>
</feature>
<feature type="binding site" evidence="1">
    <location>
        <begin position="139"/>
        <end position="140"/>
    </location>
    <ligand>
        <name>FMN</name>
        <dbReference type="ChEBI" id="CHEBI:58210"/>
    </ligand>
</feature>
<feature type="binding site" evidence="1">
    <location>
        <position position="184"/>
    </location>
    <ligand>
        <name>FMN</name>
        <dbReference type="ChEBI" id="CHEBI:58210"/>
    </ligand>
</feature>
<feature type="binding site" evidence="1">
    <location>
        <begin position="190"/>
        <end position="192"/>
    </location>
    <ligand>
        <name>substrate</name>
    </ligand>
</feature>
<feature type="binding site" evidence="1">
    <location>
        <position position="194"/>
    </location>
    <ligand>
        <name>FMN</name>
        <dbReference type="ChEBI" id="CHEBI:58210"/>
    </ligand>
</feature>
<comment type="function">
    <text evidence="1">Catalyzes the oxidation of either pyridoxine 5'-phosphate (PNP) or pyridoxamine 5'-phosphate (PMP) into pyridoxal 5'-phosphate (PLP).</text>
</comment>
<comment type="catalytic activity">
    <reaction evidence="1">
        <text>pyridoxamine 5'-phosphate + O2 + H2O = pyridoxal 5'-phosphate + H2O2 + NH4(+)</text>
        <dbReference type="Rhea" id="RHEA:15817"/>
        <dbReference type="ChEBI" id="CHEBI:15377"/>
        <dbReference type="ChEBI" id="CHEBI:15379"/>
        <dbReference type="ChEBI" id="CHEBI:16240"/>
        <dbReference type="ChEBI" id="CHEBI:28938"/>
        <dbReference type="ChEBI" id="CHEBI:58451"/>
        <dbReference type="ChEBI" id="CHEBI:597326"/>
        <dbReference type="EC" id="1.4.3.5"/>
    </reaction>
</comment>
<comment type="catalytic activity">
    <reaction evidence="1">
        <text>pyridoxine 5'-phosphate + O2 = pyridoxal 5'-phosphate + H2O2</text>
        <dbReference type="Rhea" id="RHEA:15149"/>
        <dbReference type="ChEBI" id="CHEBI:15379"/>
        <dbReference type="ChEBI" id="CHEBI:16240"/>
        <dbReference type="ChEBI" id="CHEBI:58589"/>
        <dbReference type="ChEBI" id="CHEBI:597326"/>
        <dbReference type="EC" id="1.4.3.5"/>
    </reaction>
</comment>
<comment type="cofactor">
    <cofactor evidence="1">
        <name>FMN</name>
        <dbReference type="ChEBI" id="CHEBI:58210"/>
    </cofactor>
    <text evidence="1">Binds 1 FMN per subunit.</text>
</comment>
<comment type="pathway">
    <text evidence="1">Cofactor metabolism; pyridoxal 5'-phosphate salvage; pyridoxal 5'-phosphate from pyridoxamine 5'-phosphate: step 1/1.</text>
</comment>
<comment type="pathway">
    <text evidence="1">Cofactor metabolism; pyridoxal 5'-phosphate salvage; pyridoxal 5'-phosphate from pyridoxine 5'-phosphate: step 1/1.</text>
</comment>
<comment type="subunit">
    <text evidence="1">Homodimer.</text>
</comment>
<comment type="similarity">
    <text evidence="1">Belongs to the pyridoxamine 5'-phosphate oxidase family.</text>
</comment>
<sequence length="211" mass="24109">MNLEDIRREYLLGGLNREDLLPNPIDQFNVWLEQAIASGVPDPTAMTLATVSKSGQPSQRIVLLKHLDQRGFVFFTNYRSHKAEDIAGNPCVSLHFPWHFMERQVKVQGEAVKISTAETLKYFLTRPRESQLAAWASEQSQRIDSRKALLSQFEAMKAKFTKGEIPLPDFWGGYVVKPQAIEFWQGGASRLHDRFLYCNENGSWQISRLAP</sequence>
<organism>
    <name type="scientific">Teredinibacter turnerae (strain ATCC 39867 / T7901)</name>
    <dbReference type="NCBI Taxonomy" id="377629"/>
    <lineage>
        <taxon>Bacteria</taxon>
        <taxon>Pseudomonadati</taxon>
        <taxon>Pseudomonadota</taxon>
        <taxon>Gammaproteobacteria</taxon>
        <taxon>Cellvibrionales</taxon>
        <taxon>Cellvibrionaceae</taxon>
        <taxon>Teredinibacter</taxon>
    </lineage>
</organism>
<evidence type="ECO:0000255" key="1">
    <source>
        <dbReference type="HAMAP-Rule" id="MF_01629"/>
    </source>
</evidence>
<reference key="1">
    <citation type="journal article" date="2009" name="PLoS ONE">
        <title>The complete genome of Teredinibacter turnerae T7901: an intracellular endosymbiont of marine wood-boring bivalves (shipworms).</title>
        <authorList>
            <person name="Yang J.C."/>
            <person name="Madupu R."/>
            <person name="Durkin A.S."/>
            <person name="Ekborg N.A."/>
            <person name="Pedamallu C.S."/>
            <person name="Hostetler J.B."/>
            <person name="Radune D."/>
            <person name="Toms B.S."/>
            <person name="Henrissat B."/>
            <person name="Coutinho P.M."/>
            <person name="Schwarz S."/>
            <person name="Field L."/>
            <person name="Trindade-Silva A.E."/>
            <person name="Soares C.A.G."/>
            <person name="Elshahawi S."/>
            <person name="Hanora A."/>
            <person name="Schmidt E.W."/>
            <person name="Haygood M.G."/>
            <person name="Posfai J."/>
            <person name="Benner J."/>
            <person name="Madinger C."/>
            <person name="Nove J."/>
            <person name="Anton B."/>
            <person name="Chaudhary K."/>
            <person name="Foster J."/>
            <person name="Holman A."/>
            <person name="Kumar S."/>
            <person name="Lessard P.A."/>
            <person name="Luyten Y.A."/>
            <person name="Slatko B."/>
            <person name="Wood N."/>
            <person name="Wu B."/>
            <person name="Teplitski M."/>
            <person name="Mougous J.D."/>
            <person name="Ward N."/>
            <person name="Eisen J.A."/>
            <person name="Badger J.H."/>
            <person name="Distel D.L."/>
        </authorList>
    </citation>
    <scope>NUCLEOTIDE SEQUENCE [LARGE SCALE GENOMIC DNA]</scope>
    <source>
        <strain>ATCC 39867 / T7901</strain>
    </source>
</reference>
<proteinExistence type="inferred from homology"/>
<protein>
    <recommendedName>
        <fullName evidence="1">Pyridoxine/pyridoxamine 5'-phosphate oxidase</fullName>
        <ecNumber evidence="1">1.4.3.5</ecNumber>
    </recommendedName>
    <alternativeName>
        <fullName evidence="1">PNP/PMP oxidase</fullName>
        <shortName evidence="1">PNPOx</shortName>
    </alternativeName>
    <alternativeName>
        <fullName evidence="1">Pyridoxal 5'-phosphate synthase</fullName>
    </alternativeName>
</protein>
<dbReference type="EC" id="1.4.3.5" evidence="1"/>
<dbReference type="EMBL" id="CP001614">
    <property type="protein sequence ID" value="ACR10723.1"/>
    <property type="molecule type" value="Genomic_DNA"/>
</dbReference>
<dbReference type="RefSeq" id="WP_015816835.1">
    <property type="nucleotide sequence ID" value="NC_012997.1"/>
</dbReference>
<dbReference type="SMR" id="C5BN92"/>
<dbReference type="STRING" id="377629.TERTU_2874"/>
<dbReference type="KEGG" id="ttu:TERTU_2874"/>
<dbReference type="eggNOG" id="COG0259">
    <property type="taxonomic scope" value="Bacteria"/>
</dbReference>
<dbReference type="HOGENOM" id="CLU_032263_2_2_6"/>
<dbReference type="OrthoDB" id="9780392at2"/>
<dbReference type="UniPathway" id="UPA01068">
    <property type="reaction ID" value="UER00304"/>
</dbReference>
<dbReference type="UniPathway" id="UPA01068">
    <property type="reaction ID" value="UER00305"/>
</dbReference>
<dbReference type="Proteomes" id="UP000009080">
    <property type="component" value="Chromosome"/>
</dbReference>
<dbReference type="GO" id="GO:0010181">
    <property type="term" value="F:FMN binding"/>
    <property type="evidence" value="ECO:0007669"/>
    <property type="project" value="UniProtKB-UniRule"/>
</dbReference>
<dbReference type="GO" id="GO:0004733">
    <property type="term" value="F:pyridoxamine phosphate oxidase activity"/>
    <property type="evidence" value="ECO:0007669"/>
    <property type="project" value="UniProtKB-UniRule"/>
</dbReference>
<dbReference type="GO" id="GO:0008615">
    <property type="term" value="P:pyridoxine biosynthetic process"/>
    <property type="evidence" value="ECO:0007669"/>
    <property type="project" value="UniProtKB-KW"/>
</dbReference>
<dbReference type="Gene3D" id="2.30.110.10">
    <property type="entry name" value="Electron Transport, Fmn-binding Protein, Chain A"/>
    <property type="match status" value="1"/>
</dbReference>
<dbReference type="HAMAP" id="MF_01629">
    <property type="entry name" value="PdxH"/>
    <property type="match status" value="1"/>
</dbReference>
<dbReference type="InterPro" id="IPR000659">
    <property type="entry name" value="Pyridox_Oxase"/>
</dbReference>
<dbReference type="InterPro" id="IPR019740">
    <property type="entry name" value="Pyridox_Oxase_CS"/>
</dbReference>
<dbReference type="InterPro" id="IPR011576">
    <property type="entry name" value="Pyridox_Oxase_N"/>
</dbReference>
<dbReference type="InterPro" id="IPR019576">
    <property type="entry name" value="Pyridoxamine_oxidase_dimer_C"/>
</dbReference>
<dbReference type="InterPro" id="IPR012349">
    <property type="entry name" value="Split_barrel_FMN-bd"/>
</dbReference>
<dbReference type="NCBIfam" id="TIGR00558">
    <property type="entry name" value="pdxH"/>
    <property type="match status" value="1"/>
</dbReference>
<dbReference type="NCBIfam" id="NF004231">
    <property type="entry name" value="PRK05679.1"/>
    <property type="match status" value="1"/>
</dbReference>
<dbReference type="PANTHER" id="PTHR10851:SF0">
    <property type="entry name" value="PYRIDOXINE-5'-PHOSPHATE OXIDASE"/>
    <property type="match status" value="1"/>
</dbReference>
<dbReference type="PANTHER" id="PTHR10851">
    <property type="entry name" value="PYRIDOXINE-5-PHOSPHATE OXIDASE"/>
    <property type="match status" value="1"/>
</dbReference>
<dbReference type="Pfam" id="PF10590">
    <property type="entry name" value="PNP_phzG_C"/>
    <property type="match status" value="1"/>
</dbReference>
<dbReference type="Pfam" id="PF01243">
    <property type="entry name" value="PNPOx_N"/>
    <property type="match status" value="1"/>
</dbReference>
<dbReference type="PIRSF" id="PIRSF000190">
    <property type="entry name" value="Pyd_amn-ph_oxd"/>
    <property type="match status" value="1"/>
</dbReference>
<dbReference type="SUPFAM" id="SSF50475">
    <property type="entry name" value="FMN-binding split barrel"/>
    <property type="match status" value="1"/>
</dbReference>
<dbReference type="PROSITE" id="PS01064">
    <property type="entry name" value="PYRIDOX_OXIDASE"/>
    <property type="match status" value="1"/>
</dbReference>